<accession>Q7VNX4</accession>
<reference key="1">
    <citation type="submission" date="2003-06" db="EMBL/GenBank/DDBJ databases">
        <title>The complete genome sequence of Haemophilus ducreyi.</title>
        <authorList>
            <person name="Munson R.S. Jr."/>
            <person name="Ray W.C."/>
            <person name="Mahairas G."/>
            <person name="Sabo P."/>
            <person name="Mungur R."/>
            <person name="Johnson L."/>
            <person name="Nguyen D."/>
            <person name="Wang J."/>
            <person name="Forst C."/>
            <person name="Hood L."/>
        </authorList>
    </citation>
    <scope>NUCLEOTIDE SEQUENCE [LARGE SCALE GENOMIC DNA]</scope>
    <source>
        <strain>35000HP / ATCC 700724</strain>
    </source>
</reference>
<comment type="function">
    <text evidence="1">Increases the formation of ribosomal termination complexes and stimulates activities of RF-1 and RF-2. It binds guanine nucleotides and has strong preference for UGA stop codons. It may interact directly with the ribosome. The stimulation of RF-1 and RF-2 is significantly reduced by GTP and GDP, but not by GMP.</text>
</comment>
<comment type="subcellular location">
    <subcellularLocation>
        <location evidence="1">Cytoplasm</location>
    </subcellularLocation>
</comment>
<comment type="similarity">
    <text evidence="1">Belongs to the TRAFAC class translation factor GTPase superfamily. Classic translation factor GTPase family. PrfC subfamily.</text>
</comment>
<evidence type="ECO:0000255" key="1">
    <source>
        <dbReference type="HAMAP-Rule" id="MF_00072"/>
    </source>
</evidence>
<name>RF3_HAEDU</name>
<sequence length="526" mass="59219">MSYPQEVNKRRTFAIISHPDAGKTTITEKVLLYGNAIQTAGSVKGKGSSQHAKSDWMEMEKQRGISITTSVMQFPYNNCLVNLLDTPGHEDFSEDTYRTLTAVDSCLMVIDSAKGVEERTIKLMEVTRLRDTPILTFMNKLDRDIRDPMELLDEVESILKIRCAPITWPIGCGKLFKGVYHLAKDEMYLYKSGQGSTIQEIQIVKGLDNPELDVMVGDDLANQLREELELVQGASNEFDHQAFINGELTPVFFGTALGNFGVDHFLDGLTEWAPKPQARVADIRTVESAEQKFSGFVFKIQANMDPKHRDRVAFMRVVSGKYEKGMKLKHVRLGKEVVISDALIFMAGDRSQAEQAYAGDIIGLHNHGTIQIGDTFTQGENLKFIGIPNFAPELFRRIRLKDPLKQKQLLKGLIQLSEEGAVQVFRPLINNDLIVGAVGVLQFDVVVSRLKSEYNVEAIYETVNVATARWVECTDAKKFEEFKRKNEQNLALDGGDNLTYIAPTMVNLNLAIERYPDVVFFKTREH</sequence>
<proteinExistence type="inferred from homology"/>
<organism>
    <name type="scientific">Haemophilus ducreyi (strain 35000HP / ATCC 700724)</name>
    <dbReference type="NCBI Taxonomy" id="233412"/>
    <lineage>
        <taxon>Bacteria</taxon>
        <taxon>Pseudomonadati</taxon>
        <taxon>Pseudomonadota</taxon>
        <taxon>Gammaproteobacteria</taxon>
        <taxon>Pasteurellales</taxon>
        <taxon>Pasteurellaceae</taxon>
        <taxon>Haemophilus</taxon>
    </lineage>
</organism>
<feature type="chain" id="PRO_0000210943" description="Peptide chain release factor 3">
    <location>
        <begin position="1"/>
        <end position="526"/>
    </location>
</feature>
<feature type="domain" description="tr-type G">
    <location>
        <begin position="8"/>
        <end position="277"/>
    </location>
</feature>
<feature type="binding site" evidence="1">
    <location>
        <begin position="17"/>
        <end position="24"/>
    </location>
    <ligand>
        <name>GTP</name>
        <dbReference type="ChEBI" id="CHEBI:37565"/>
    </ligand>
</feature>
<feature type="binding site" evidence="1">
    <location>
        <begin position="85"/>
        <end position="89"/>
    </location>
    <ligand>
        <name>GTP</name>
        <dbReference type="ChEBI" id="CHEBI:37565"/>
    </ligand>
</feature>
<feature type="binding site" evidence="1">
    <location>
        <begin position="139"/>
        <end position="142"/>
    </location>
    <ligand>
        <name>GTP</name>
        <dbReference type="ChEBI" id="CHEBI:37565"/>
    </ligand>
</feature>
<gene>
    <name evidence="1" type="primary">prfC</name>
    <name type="ordered locus">HD_0351</name>
</gene>
<keyword id="KW-0963">Cytoplasm</keyword>
<keyword id="KW-0342">GTP-binding</keyword>
<keyword id="KW-0547">Nucleotide-binding</keyword>
<keyword id="KW-0648">Protein biosynthesis</keyword>
<keyword id="KW-1185">Reference proteome</keyword>
<protein>
    <recommendedName>
        <fullName evidence="1">Peptide chain release factor 3</fullName>
        <shortName evidence="1">RF-3</shortName>
    </recommendedName>
</protein>
<dbReference type="EMBL" id="AE017143">
    <property type="protein sequence ID" value="AAP95323.1"/>
    <property type="molecule type" value="Genomic_DNA"/>
</dbReference>
<dbReference type="RefSeq" id="WP_010944376.1">
    <property type="nucleotide sequence ID" value="NC_002940.2"/>
</dbReference>
<dbReference type="SMR" id="Q7VNX4"/>
<dbReference type="STRING" id="233412.HD_0351"/>
<dbReference type="KEGG" id="hdu:HD_0351"/>
<dbReference type="eggNOG" id="COG4108">
    <property type="taxonomic scope" value="Bacteria"/>
</dbReference>
<dbReference type="HOGENOM" id="CLU_002794_2_1_6"/>
<dbReference type="OrthoDB" id="9801472at2"/>
<dbReference type="Proteomes" id="UP000001022">
    <property type="component" value="Chromosome"/>
</dbReference>
<dbReference type="GO" id="GO:0005829">
    <property type="term" value="C:cytosol"/>
    <property type="evidence" value="ECO:0007669"/>
    <property type="project" value="TreeGrafter"/>
</dbReference>
<dbReference type="GO" id="GO:0005525">
    <property type="term" value="F:GTP binding"/>
    <property type="evidence" value="ECO:0007669"/>
    <property type="project" value="UniProtKB-UniRule"/>
</dbReference>
<dbReference type="GO" id="GO:0003924">
    <property type="term" value="F:GTPase activity"/>
    <property type="evidence" value="ECO:0007669"/>
    <property type="project" value="InterPro"/>
</dbReference>
<dbReference type="GO" id="GO:0097216">
    <property type="term" value="F:guanosine tetraphosphate binding"/>
    <property type="evidence" value="ECO:0007669"/>
    <property type="project" value="UniProtKB-ARBA"/>
</dbReference>
<dbReference type="GO" id="GO:0016150">
    <property type="term" value="F:translation release factor activity, codon nonspecific"/>
    <property type="evidence" value="ECO:0007669"/>
    <property type="project" value="TreeGrafter"/>
</dbReference>
<dbReference type="GO" id="GO:0016149">
    <property type="term" value="F:translation release factor activity, codon specific"/>
    <property type="evidence" value="ECO:0007669"/>
    <property type="project" value="UniProtKB-UniRule"/>
</dbReference>
<dbReference type="GO" id="GO:0006449">
    <property type="term" value="P:regulation of translational termination"/>
    <property type="evidence" value="ECO:0007669"/>
    <property type="project" value="UniProtKB-UniRule"/>
</dbReference>
<dbReference type="CDD" id="cd04169">
    <property type="entry name" value="RF3"/>
    <property type="match status" value="1"/>
</dbReference>
<dbReference type="CDD" id="cd03689">
    <property type="entry name" value="RF3_II"/>
    <property type="match status" value="1"/>
</dbReference>
<dbReference type="CDD" id="cd16259">
    <property type="entry name" value="RF3_III"/>
    <property type="match status" value="1"/>
</dbReference>
<dbReference type="FunFam" id="2.40.30.10:FF:000040">
    <property type="entry name" value="Peptide chain release factor 3"/>
    <property type="match status" value="1"/>
</dbReference>
<dbReference type="FunFam" id="3.30.70.3280:FF:000001">
    <property type="entry name" value="Peptide chain release factor 3"/>
    <property type="match status" value="1"/>
</dbReference>
<dbReference type="FunFam" id="3.40.50.300:FF:000542">
    <property type="entry name" value="Peptide chain release factor 3"/>
    <property type="match status" value="1"/>
</dbReference>
<dbReference type="Gene3D" id="3.40.50.300">
    <property type="entry name" value="P-loop containing nucleotide triphosphate hydrolases"/>
    <property type="match status" value="2"/>
</dbReference>
<dbReference type="Gene3D" id="3.30.70.3280">
    <property type="entry name" value="Peptide chain release factor 3, domain III"/>
    <property type="match status" value="1"/>
</dbReference>
<dbReference type="HAMAP" id="MF_00072">
    <property type="entry name" value="Rel_fac_3"/>
    <property type="match status" value="1"/>
</dbReference>
<dbReference type="InterPro" id="IPR053905">
    <property type="entry name" value="EF-G-like_DII"/>
</dbReference>
<dbReference type="InterPro" id="IPR035647">
    <property type="entry name" value="EFG_III/V"/>
</dbReference>
<dbReference type="InterPro" id="IPR031157">
    <property type="entry name" value="G_TR_CS"/>
</dbReference>
<dbReference type="InterPro" id="IPR027417">
    <property type="entry name" value="P-loop_NTPase"/>
</dbReference>
<dbReference type="InterPro" id="IPR004548">
    <property type="entry name" value="PrfC"/>
</dbReference>
<dbReference type="InterPro" id="IPR032090">
    <property type="entry name" value="RF3_C"/>
</dbReference>
<dbReference type="InterPro" id="IPR038467">
    <property type="entry name" value="RF3_dom_3_sf"/>
</dbReference>
<dbReference type="InterPro" id="IPR041732">
    <property type="entry name" value="RF3_GTP-bd"/>
</dbReference>
<dbReference type="InterPro" id="IPR005225">
    <property type="entry name" value="Small_GTP-bd"/>
</dbReference>
<dbReference type="InterPro" id="IPR000795">
    <property type="entry name" value="T_Tr_GTP-bd_dom"/>
</dbReference>
<dbReference type="InterPro" id="IPR009000">
    <property type="entry name" value="Transl_B-barrel_sf"/>
</dbReference>
<dbReference type="NCBIfam" id="TIGR00503">
    <property type="entry name" value="prfC"/>
    <property type="match status" value="1"/>
</dbReference>
<dbReference type="NCBIfam" id="NF001964">
    <property type="entry name" value="PRK00741.1"/>
    <property type="match status" value="1"/>
</dbReference>
<dbReference type="NCBIfam" id="TIGR00231">
    <property type="entry name" value="small_GTP"/>
    <property type="match status" value="1"/>
</dbReference>
<dbReference type="PANTHER" id="PTHR43556">
    <property type="entry name" value="PEPTIDE CHAIN RELEASE FACTOR RF3"/>
    <property type="match status" value="1"/>
</dbReference>
<dbReference type="PANTHER" id="PTHR43556:SF2">
    <property type="entry name" value="PEPTIDE CHAIN RELEASE FACTOR RF3"/>
    <property type="match status" value="1"/>
</dbReference>
<dbReference type="Pfam" id="PF22042">
    <property type="entry name" value="EF-G_D2"/>
    <property type="match status" value="1"/>
</dbReference>
<dbReference type="Pfam" id="PF00009">
    <property type="entry name" value="GTP_EFTU"/>
    <property type="match status" value="1"/>
</dbReference>
<dbReference type="Pfam" id="PF16658">
    <property type="entry name" value="RF3_C"/>
    <property type="match status" value="1"/>
</dbReference>
<dbReference type="PRINTS" id="PR00315">
    <property type="entry name" value="ELONGATNFCT"/>
</dbReference>
<dbReference type="SUPFAM" id="SSF54980">
    <property type="entry name" value="EF-G C-terminal domain-like"/>
    <property type="match status" value="1"/>
</dbReference>
<dbReference type="SUPFAM" id="SSF52540">
    <property type="entry name" value="P-loop containing nucleoside triphosphate hydrolases"/>
    <property type="match status" value="1"/>
</dbReference>
<dbReference type="SUPFAM" id="SSF50447">
    <property type="entry name" value="Translation proteins"/>
    <property type="match status" value="1"/>
</dbReference>
<dbReference type="PROSITE" id="PS00301">
    <property type="entry name" value="G_TR_1"/>
    <property type="match status" value="1"/>
</dbReference>
<dbReference type="PROSITE" id="PS51722">
    <property type="entry name" value="G_TR_2"/>
    <property type="match status" value="1"/>
</dbReference>